<organism>
    <name type="scientific">Streptococcus equi subsp. zooepidemicus (strain MGCS10565)</name>
    <dbReference type="NCBI Taxonomy" id="552526"/>
    <lineage>
        <taxon>Bacteria</taxon>
        <taxon>Bacillati</taxon>
        <taxon>Bacillota</taxon>
        <taxon>Bacilli</taxon>
        <taxon>Lactobacillales</taxon>
        <taxon>Streptococcaceae</taxon>
        <taxon>Streptococcus</taxon>
    </lineage>
</organism>
<comment type="cofactor">
    <cofactor evidence="1">
        <name>Zn(2+)</name>
        <dbReference type="ChEBI" id="CHEBI:29105"/>
    </cofactor>
    <text evidence="1">Binds 1 zinc ion per subunit.</text>
</comment>
<comment type="subcellular location">
    <subcellularLocation>
        <location evidence="1">Cell membrane</location>
        <topology evidence="1">Multi-pass membrane protein</topology>
    </subcellularLocation>
</comment>
<comment type="similarity">
    <text evidence="1">Belongs to the peptidase M48B family.</text>
</comment>
<sequence>MLYQQISQNKRRTVILLFAFFVLLVVIGAAAGYLLADSYQLGAAFALIIGAIYAFSMIFQSTSLVMGMNKAKEITVNDAPDFFHIVEDMALVAQIPMPKVFIIDDPSLNAFATGSSPQNAAVAATTGLLKVMNREELEAVIGHEVSHIRNYDIRISTIAVALASAVTLISSIGGRMMWYSGGRRRDDDRNDNGFGAIMLIFSILSLILAPLAASLVQLAISRQREYLADASSVELTRNPEGMIRALQKLSNSQPMTHPVDDASAALYINEPRKKEKLSALFSTHPPIEDRIERLKHM</sequence>
<proteinExistence type="inferred from homology"/>
<protein>
    <recommendedName>
        <fullName evidence="1">Protease HtpX homolog</fullName>
        <ecNumber evidence="1">3.4.24.-</ecNumber>
    </recommendedName>
</protein>
<gene>
    <name evidence="1" type="primary">htpX</name>
    <name type="ordered locus">Sez_1668</name>
</gene>
<dbReference type="EC" id="3.4.24.-" evidence="1"/>
<dbReference type="EMBL" id="CP001129">
    <property type="protein sequence ID" value="ACG62999.1"/>
    <property type="molecule type" value="Genomic_DNA"/>
</dbReference>
<dbReference type="RefSeq" id="WP_012516255.1">
    <property type="nucleotide sequence ID" value="NC_011134.1"/>
</dbReference>
<dbReference type="KEGG" id="sez:Sez_1668"/>
<dbReference type="HOGENOM" id="CLU_042266_2_1_9"/>
<dbReference type="Proteomes" id="UP000001873">
    <property type="component" value="Chromosome"/>
</dbReference>
<dbReference type="GO" id="GO:0005886">
    <property type="term" value="C:plasma membrane"/>
    <property type="evidence" value="ECO:0007669"/>
    <property type="project" value="UniProtKB-SubCell"/>
</dbReference>
<dbReference type="GO" id="GO:0004222">
    <property type="term" value="F:metalloendopeptidase activity"/>
    <property type="evidence" value="ECO:0007669"/>
    <property type="project" value="UniProtKB-UniRule"/>
</dbReference>
<dbReference type="GO" id="GO:0008270">
    <property type="term" value="F:zinc ion binding"/>
    <property type="evidence" value="ECO:0007669"/>
    <property type="project" value="UniProtKB-UniRule"/>
</dbReference>
<dbReference type="GO" id="GO:0006508">
    <property type="term" value="P:proteolysis"/>
    <property type="evidence" value="ECO:0007669"/>
    <property type="project" value="UniProtKB-KW"/>
</dbReference>
<dbReference type="CDD" id="cd07340">
    <property type="entry name" value="M48B_Htpx_like"/>
    <property type="match status" value="1"/>
</dbReference>
<dbReference type="Gene3D" id="3.30.2010.10">
    <property type="entry name" value="Metalloproteases ('zincins'), catalytic domain"/>
    <property type="match status" value="1"/>
</dbReference>
<dbReference type="HAMAP" id="MF_00188">
    <property type="entry name" value="Pept_M48_protease_HtpX"/>
    <property type="match status" value="1"/>
</dbReference>
<dbReference type="InterPro" id="IPR050083">
    <property type="entry name" value="HtpX_protease"/>
</dbReference>
<dbReference type="InterPro" id="IPR022919">
    <property type="entry name" value="Pept_M48_protease_HtpX"/>
</dbReference>
<dbReference type="InterPro" id="IPR001915">
    <property type="entry name" value="Peptidase_M48"/>
</dbReference>
<dbReference type="NCBIfam" id="NF003425">
    <property type="entry name" value="PRK04897.1"/>
    <property type="match status" value="1"/>
</dbReference>
<dbReference type="PANTHER" id="PTHR43221">
    <property type="entry name" value="PROTEASE HTPX"/>
    <property type="match status" value="1"/>
</dbReference>
<dbReference type="PANTHER" id="PTHR43221:SF1">
    <property type="entry name" value="PROTEASE HTPX"/>
    <property type="match status" value="1"/>
</dbReference>
<dbReference type="Pfam" id="PF01435">
    <property type="entry name" value="Peptidase_M48"/>
    <property type="match status" value="1"/>
</dbReference>
<reference key="1">
    <citation type="journal article" date="2008" name="PLoS ONE">
        <title>Genome sequence of a lancefield group C Streptococcus zooepidemicus strain causing epidemic nephritis: new information about an old disease.</title>
        <authorList>
            <person name="Beres S.B."/>
            <person name="Sesso R."/>
            <person name="Pinto S.W.L."/>
            <person name="Hoe N.P."/>
            <person name="Porcella S.F."/>
            <person name="Deleo F.R."/>
            <person name="Musser J.M."/>
        </authorList>
    </citation>
    <scope>NUCLEOTIDE SEQUENCE [LARGE SCALE GENOMIC DNA]</scope>
    <source>
        <strain>MGCS10565</strain>
    </source>
</reference>
<feature type="chain" id="PRO_1000098848" description="Protease HtpX homolog">
    <location>
        <begin position="1"/>
        <end position="297"/>
    </location>
</feature>
<feature type="transmembrane region" description="Helical" evidence="1">
    <location>
        <begin position="14"/>
        <end position="34"/>
    </location>
</feature>
<feature type="transmembrane region" description="Helical" evidence="1">
    <location>
        <begin position="39"/>
        <end position="59"/>
    </location>
</feature>
<feature type="transmembrane region" description="Helical" evidence="1">
    <location>
        <begin position="158"/>
        <end position="178"/>
    </location>
</feature>
<feature type="transmembrane region" description="Helical" evidence="1">
    <location>
        <begin position="193"/>
        <end position="213"/>
    </location>
</feature>
<feature type="active site" evidence="1">
    <location>
        <position position="144"/>
    </location>
</feature>
<feature type="binding site" evidence="1">
    <location>
        <position position="143"/>
    </location>
    <ligand>
        <name>Zn(2+)</name>
        <dbReference type="ChEBI" id="CHEBI:29105"/>
        <note>catalytic</note>
    </ligand>
</feature>
<feature type="binding site" evidence="1">
    <location>
        <position position="147"/>
    </location>
    <ligand>
        <name>Zn(2+)</name>
        <dbReference type="ChEBI" id="CHEBI:29105"/>
        <note>catalytic</note>
    </ligand>
</feature>
<feature type="binding site" evidence="1">
    <location>
        <position position="225"/>
    </location>
    <ligand>
        <name>Zn(2+)</name>
        <dbReference type="ChEBI" id="CHEBI:29105"/>
        <note>catalytic</note>
    </ligand>
</feature>
<keyword id="KW-1003">Cell membrane</keyword>
<keyword id="KW-0378">Hydrolase</keyword>
<keyword id="KW-0472">Membrane</keyword>
<keyword id="KW-0479">Metal-binding</keyword>
<keyword id="KW-0482">Metalloprotease</keyword>
<keyword id="KW-0645">Protease</keyword>
<keyword id="KW-0812">Transmembrane</keyword>
<keyword id="KW-1133">Transmembrane helix</keyword>
<keyword id="KW-0862">Zinc</keyword>
<evidence type="ECO:0000255" key="1">
    <source>
        <dbReference type="HAMAP-Rule" id="MF_00188"/>
    </source>
</evidence>
<accession>B4U4T2</accession>
<name>HTPX_STREM</name>